<dbReference type="EC" id="2.1.2.9" evidence="1"/>
<dbReference type="EMBL" id="CP000319">
    <property type="protein sequence ID" value="ABE64420.1"/>
    <property type="molecule type" value="Genomic_DNA"/>
</dbReference>
<dbReference type="RefSeq" id="WP_011512059.1">
    <property type="nucleotide sequence ID" value="NC_007964.1"/>
</dbReference>
<dbReference type="SMR" id="Q1QH77"/>
<dbReference type="STRING" id="323097.Nham_3694"/>
<dbReference type="KEGG" id="nha:Nham_3694"/>
<dbReference type="eggNOG" id="COG0223">
    <property type="taxonomic scope" value="Bacteria"/>
</dbReference>
<dbReference type="HOGENOM" id="CLU_033347_1_2_5"/>
<dbReference type="OrthoDB" id="9802815at2"/>
<dbReference type="Proteomes" id="UP000001953">
    <property type="component" value="Chromosome"/>
</dbReference>
<dbReference type="GO" id="GO:0005829">
    <property type="term" value="C:cytosol"/>
    <property type="evidence" value="ECO:0007669"/>
    <property type="project" value="TreeGrafter"/>
</dbReference>
<dbReference type="GO" id="GO:0004479">
    <property type="term" value="F:methionyl-tRNA formyltransferase activity"/>
    <property type="evidence" value="ECO:0007669"/>
    <property type="project" value="UniProtKB-UniRule"/>
</dbReference>
<dbReference type="CDD" id="cd08646">
    <property type="entry name" value="FMT_core_Met-tRNA-FMT_N"/>
    <property type="match status" value="1"/>
</dbReference>
<dbReference type="CDD" id="cd08704">
    <property type="entry name" value="Met_tRNA_FMT_C"/>
    <property type="match status" value="1"/>
</dbReference>
<dbReference type="FunFam" id="3.40.50.12230:FF:000001">
    <property type="entry name" value="Methionyl-tRNA formyltransferase"/>
    <property type="match status" value="1"/>
</dbReference>
<dbReference type="Gene3D" id="3.10.25.10">
    <property type="entry name" value="Formyl transferase, C-terminal domain"/>
    <property type="match status" value="1"/>
</dbReference>
<dbReference type="Gene3D" id="3.40.50.170">
    <property type="entry name" value="Formyl transferase, N-terminal domain"/>
    <property type="match status" value="1"/>
</dbReference>
<dbReference type="HAMAP" id="MF_00182">
    <property type="entry name" value="Formyl_trans"/>
    <property type="match status" value="1"/>
</dbReference>
<dbReference type="InterPro" id="IPR005794">
    <property type="entry name" value="Fmt"/>
</dbReference>
<dbReference type="InterPro" id="IPR005793">
    <property type="entry name" value="Formyl_trans_C"/>
</dbReference>
<dbReference type="InterPro" id="IPR037022">
    <property type="entry name" value="Formyl_trans_C_sf"/>
</dbReference>
<dbReference type="InterPro" id="IPR002376">
    <property type="entry name" value="Formyl_transf_N"/>
</dbReference>
<dbReference type="InterPro" id="IPR036477">
    <property type="entry name" value="Formyl_transf_N_sf"/>
</dbReference>
<dbReference type="InterPro" id="IPR011034">
    <property type="entry name" value="Formyl_transferase-like_C_sf"/>
</dbReference>
<dbReference type="InterPro" id="IPR001555">
    <property type="entry name" value="GART_AS"/>
</dbReference>
<dbReference type="InterPro" id="IPR044135">
    <property type="entry name" value="Met-tRNA-FMT_C"/>
</dbReference>
<dbReference type="InterPro" id="IPR041711">
    <property type="entry name" value="Met-tRNA-FMT_N"/>
</dbReference>
<dbReference type="NCBIfam" id="TIGR00460">
    <property type="entry name" value="fmt"/>
    <property type="match status" value="1"/>
</dbReference>
<dbReference type="PANTHER" id="PTHR11138">
    <property type="entry name" value="METHIONYL-TRNA FORMYLTRANSFERASE"/>
    <property type="match status" value="1"/>
</dbReference>
<dbReference type="PANTHER" id="PTHR11138:SF5">
    <property type="entry name" value="METHIONYL-TRNA FORMYLTRANSFERASE, MITOCHONDRIAL"/>
    <property type="match status" value="1"/>
</dbReference>
<dbReference type="Pfam" id="PF02911">
    <property type="entry name" value="Formyl_trans_C"/>
    <property type="match status" value="1"/>
</dbReference>
<dbReference type="Pfam" id="PF00551">
    <property type="entry name" value="Formyl_trans_N"/>
    <property type="match status" value="1"/>
</dbReference>
<dbReference type="SUPFAM" id="SSF50486">
    <property type="entry name" value="FMT C-terminal domain-like"/>
    <property type="match status" value="1"/>
</dbReference>
<dbReference type="SUPFAM" id="SSF53328">
    <property type="entry name" value="Formyltransferase"/>
    <property type="match status" value="1"/>
</dbReference>
<dbReference type="PROSITE" id="PS00373">
    <property type="entry name" value="GART"/>
    <property type="match status" value="1"/>
</dbReference>
<sequence>MPLRLIFMGTPEFAVPTLLQLIAHGHEIAAVYTREARPAGRGMKLQPSPVAREAHRLGIPVLTPKTLKTPAALDEFRSHGADAAVVVAYGMILPQAILDAPPLGCFNLHGSLLPRWRGAAPINRAIMAGDAETGVMVMKMDAGLDTGDVAMAERIAVTDAMTASDLHDALALLGADLMARAMAALARGGLQLTKQSEHGVTYAAKIDKAEARIDWSRPARDVLRHIHGLSPFPGAWCEMLVDGEQVRVKILRCGVVKGPGEPGELLDDRLTIACKDGAIRVLELQRAGKPPMKADAFLNGTPLKPPMRFA</sequence>
<feature type="chain" id="PRO_1000020110" description="Methionyl-tRNA formyltransferase">
    <location>
        <begin position="1"/>
        <end position="310"/>
    </location>
</feature>
<feature type="binding site" evidence="1">
    <location>
        <begin position="111"/>
        <end position="114"/>
    </location>
    <ligand>
        <name>(6S)-5,6,7,8-tetrahydrofolate</name>
        <dbReference type="ChEBI" id="CHEBI:57453"/>
    </ligand>
</feature>
<gene>
    <name evidence="1" type="primary">fmt</name>
    <name type="ordered locus">Nham_3694</name>
</gene>
<comment type="function">
    <text evidence="1">Attaches a formyl group to the free amino group of methionyl-tRNA(fMet). The formyl group appears to play a dual role in the initiator identity of N-formylmethionyl-tRNA by promoting its recognition by IF2 and preventing the misappropriation of this tRNA by the elongation apparatus.</text>
</comment>
<comment type="catalytic activity">
    <reaction evidence="1">
        <text>L-methionyl-tRNA(fMet) + (6R)-10-formyltetrahydrofolate = N-formyl-L-methionyl-tRNA(fMet) + (6S)-5,6,7,8-tetrahydrofolate + H(+)</text>
        <dbReference type="Rhea" id="RHEA:24380"/>
        <dbReference type="Rhea" id="RHEA-COMP:9952"/>
        <dbReference type="Rhea" id="RHEA-COMP:9953"/>
        <dbReference type="ChEBI" id="CHEBI:15378"/>
        <dbReference type="ChEBI" id="CHEBI:57453"/>
        <dbReference type="ChEBI" id="CHEBI:78530"/>
        <dbReference type="ChEBI" id="CHEBI:78844"/>
        <dbReference type="ChEBI" id="CHEBI:195366"/>
        <dbReference type="EC" id="2.1.2.9"/>
    </reaction>
</comment>
<comment type="similarity">
    <text evidence="1">Belongs to the Fmt family.</text>
</comment>
<name>FMT_NITHX</name>
<proteinExistence type="inferred from homology"/>
<keyword id="KW-0648">Protein biosynthesis</keyword>
<keyword id="KW-1185">Reference proteome</keyword>
<keyword id="KW-0808">Transferase</keyword>
<accession>Q1QH77</accession>
<evidence type="ECO:0000255" key="1">
    <source>
        <dbReference type="HAMAP-Rule" id="MF_00182"/>
    </source>
</evidence>
<protein>
    <recommendedName>
        <fullName evidence="1">Methionyl-tRNA formyltransferase</fullName>
        <ecNumber evidence="1">2.1.2.9</ecNumber>
    </recommendedName>
</protein>
<organism>
    <name type="scientific">Nitrobacter hamburgensis (strain DSM 10229 / NCIMB 13809 / X14)</name>
    <dbReference type="NCBI Taxonomy" id="323097"/>
    <lineage>
        <taxon>Bacteria</taxon>
        <taxon>Pseudomonadati</taxon>
        <taxon>Pseudomonadota</taxon>
        <taxon>Alphaproteobacteria</taxon>
        <taxon>Hyphomicrobiales</taxon>
        <taxon>Nitrobacteraceae</taxon>
        <taxon>Nitrobacter</taxon>
    </lineage>
</organism>
<reference key="1">
    <citation type="submission" date="2006-03" db="EMBL/GenBank/DDBJ databases">
        <title>Complete sequence of chromosome of Nitrobacter hamburgensis X14.</title>
        <authorList>
            <consortium name="US DOE Joint Genome Institute"/>
            <person name="Copeland A."/>
            <person name="Lucas S."/>
            <person name="Lapidus A."/>
            <person name="Barry K."/>
            <person name="Detter J.C."/>
            <person name="Glavina del Rio T."/>
            <person name="Hammon N."/>
            <person name="Israni S."/>
            <person name="Dalin E."/>
            <person name="Tice H."/>
            <person name="Pitluck S."/>
            <person name="Chain P."/>
            <person name="Malfatti S."/>
            <person name="Shin M."/>
            <person name="Vergez L."/>
            <person name="Schmutz J."/>
            <person name="Larimer F."/>
            <person name="Land M."/>
            <person name="Hauser L."/>
            <person name="Kyrpides N."/>
            <person name="Ivanova N."/>
            <person name="Ward B."/>
            <person name="Arp D."/>
            <person name="Klotz M."/>
            <person name="Stein L."/>
            <person name="O'Mullan G."/>
            <person name="Starkenburg S."/>
            <person name="Sayavedra L."/>
            <person name="Poret-Peterson A.T."/>
            <person name="Gentry M.E."/>
            <person name="Bruce D."/>
            <person name="Richardson P."/>
        </authorList>
    </citation>
    <scope>NUCLEOTIDE SEQUENCE [LARGE SCALE GENOMIC DNA]</scope>
    <source>
        <strain>DSM 10229 / NCIMB 13809 / X14</strain>
    </source>
</reference>